<dbReference type="EC" id="1.17.7.4" evidence="1"/>
<dbReference type="EMBL" id="CP000095">
    <property type="protein sequence ID" value="AAZ59118.1"/>
    <property type="molecule type" value="Genomic_DNA"/>
</dbReference>
<dbReference type="RefSeq" id="WP_011294263.1">
    <property type="nucleotide sequence ID" value="NC_007335.2"/>
</dbReference>
<dbReference type="SMR" id="Q46HB0"/>
<dbReference type="STRING" id="59920.PMN2A_1630"/>
<dbReference type="KEGG" id="pmn:PMN2A_1630"/>
<dbReference type="HOGENOM" id="CLU_027486_4_0_3"/>
<dbReference type="OrthoDB" id="9804077at2"/>
<dbReference type="PhylomeDB" id="Q46HB0"/>
<dbReference type="UniPathway" id="UPA00056">
    <property type="reaction ID" value="UER00097"/>
</dbReference>
<dbReference type="UniPathway" id="UPA00059">
    <property type="reaction ID" value="UER00105"/>
</dbReference>
<dbReference type="Proteomes" id="UP000002535">
    <property type="component" value="Chromosome"/>
</dbReference>
<dbReference type="GO" id="GO:0051539">
    <property type="term" value="F:4 iron, 4 sulfur cluster binding"/>
    <property type="evidence" value="ECO:0007669"/>
    <property type="project" value="UniProtKB-UniRule"/>
</dbReference>
<dbReference type="GO" id="GO:0051745">
    <property type="term" value="F:4-hydroxy-3-methylbut-2-enyl diphosphate reductase activity"/>
    <property type="evidence" value="ECO:0007669"/>
    <property type="project" value="UniProtKB-UniRule"/>
</dbReference>
<dbReference type="GO" id="GO:0046872">
    <property type="term" value="F:metal ion binding"/>
    <property type="evidence" value="ECO:0007669"/>
    <property type="project" value="UniProtKB-KW"/>
</dbReference>
<dbReference type="GO" id="GO:0050992">
    <property type="term" value="P:dimethylallyl diphosphate biosynthetic process"/>
    <property type="evidence" value="ECO:0007669"/>
    <property type="project" value="UniProtKB-UniRule"/>
</dbReference>
<dbReference type="GO" id="GO:0019288">
    <property type="term" value="P:isopentenyl diphosphate biosynthetic process, methylerythritol 4-phosphate pathway"/>
    <property type="evidence" value="ECO:0007669"/>
    <property type="project" value="UniProtKB-UniRule"/>
</dbReference>
<dbReference type="GO" id="GO:0016114">
    <property type="term" value="P:terpenoid biosynthetic process"/>
    <property type="evidence" value="ECO:0007669"/>
    <property type="project" value="UniProtKB-UniRule"/>
</dbReference>
<dbReference type="CDD" id="cd13944">
    <property type="entry name" value="lytB_ispH"/>
    <property type="match status" value="1"/>
</dbReference>
<dbReference type="Gene3D" id="3.40.50.11270">
    <property type="match status" value="1"/>
</dbReference>
<dbReference type="Gene3D" id="3.40.1010.20">
    <property type="entry name" value="4-hydroxy-3-methylbut-2-enyl diphosphate reductase, catalytic domain"/>
    <property type="match status" value="2"/>
</dbReference>
<dbReference type="HAMAP" id="MF_00191">
    <property type="entry name" value="IspH"/>
    <property type="match status" value="1"/>
</dbReference>
<dbReference type="InterPro" id="IPR003451">
    <property type="entry name" value="LytB/IspH"/>
</dbReference>
<dbReference type="NCBIfam" id="TIGR00216">
    <property type="entry name" value="ispH_lytB"/>
    <property type="match status" value="1"/>
</dbReference>
<dbReference type="NCBIfam" id="NF009911">
    <property type="entry name" value="PRK13371.1"/>
    <property type="match status" value="1"/>
</dbReference>
<dbReference type="PANTHER" id="PTHR31619">
    <property type="entry name" value="4-HYDROXY-3-METHYLBUT-2-ENYL DIPHOSPHATE REDUCTASE, CHLOROPLASTIC"/>
    <property type="match status" value="1"/>
</dbReference>
<dbReference type="PANTHER" id="PTHR31619:SF5">
    <property type="entry name" value="4-HYDROXY-3-METHYLBUT-2-ENYL DIPHOSPHATE REDUCTASE, CHLOROPLASTIC"/>
    <property type="match status" value="1"/>
</dbReference>
<dbReference type="Pfam" id="PF02401">
    <property type="entry name" value="LYTB"/>
    <property type="match status" value="1"/>
</dbReference>
<name>ISPH_PROMT</name>
<protein>
    <recommendedName>
        <fullName evidence="1">4-hydroxy-3-methylbut-2-enyl diphosphate reductase</fullName>
        <shortName evidence="1">HMBPP reductase</shortName>
        <ecNumber evidence="1">1.17.7.4</ecNumber>
    </recommendedName>
</protein>
<sequence>MDTQAFKQTLHKSDRYNRRGFGSANKRAQALAEAYQSGLIGSIRENGNLLEHGRLKVKLAEAFGFCWGVERSVAMAYETRKHYPNERIWITNEIIHNPSVNDHLRKMNVLFISEEKGVKDFSVVKDGDVVILPAFGATVQDMKLLHDRGCHIIDTTCPWVSKVWHTVEKHKKHTFTSIIHGKYKHEETLATSSFAGTYLVLFDLEEANYVSDYILGKGNREDFLKRFSKASSAGFDPDKDLQKVGVANQTTMLKSETEEIGRLFEKTMLQRFGPAQLNEHFLAINTICDATEERQGAMFSLVDEPLDLMVVIGGFNSSNTTHLQEIAISRGIRSFHIDTPERIGEETNTITHMPLEGGELLTEENFLQNGNISVGITSGASTPDRVVEDVIHKLMKIGENF</sequence>
<proteinExistence type="inferred from homology"/>
<organism>
    <name type="scientific">Prochlorococcus marinus (strain NATL2A)</name>
    <dbReference type="NCBI Taxonomy" id="59920"/>
    <lineage>
        <taxon>Bacteria</taxon>
        <taxon>Bacillati</taxon>
        <taxon>Cyanobacteriota</taxon>
        <taxon>Cyanophyceae</taxon>
        <taxon>Synechococcales</taxon>
        <taxon>Prochlorococcaceae</taxon>
        <taxon>Prochlorococcus</taxon>
    </lineage>
</organism>
<accession>Q46HB0</accession>
<comment type="function">
    <text evidence="1">Catalyzes the conversion of 1-hydroxy-2-methyl-2-(E)-butenyl 4-diphosphate (HMBPP) into a mixture of isopentenyl diphosphate (IPP) and dimethylallyl diphosphate (DMAPP). Acts in the terminal step of the DOXP/MEP pathway for isoprenoid precursor biosynthesis.</text>
</comment>
<comment type="catalytic activity">
    <reaction evidence="1">
        <text>isopentenyl diphosphate + 2 oxidized [2Fe-2S]-[ferredoxin] + H2O = (2E)-4-hydroxy-3-methylbut-2-enyl diphosphate + 2 reduced [2Fe-2S]-[ferredoxin] + 2 H(+)</text>
        <dbReference type="Rhea" id="RHEA:24488"/>
        <dbReference type="Rhea" id="RHEA-COMP:10000"/>
        <dbReference type="Rhea" id="RHEA-COMP:10001"/>
        <dbReference type="ChEBI" id="CHEBI:15377"/>
        <dbReference type="ChEBI" id="CHEBI:15378"/>
        <dbReference type="ChEBI" id="CHEBI:33737"/>
        <dbReference type="ChEBI" id="CHEBI:33738"/>
        <dbReference type="ChEBI" id="CHEBI:128753"/>
        <dbReference type="ChEBI" id="CHEBI:128769"/>
        <dbReference type="EC" id="1.17.7.4"/>
    </reaction>
</comment>
<comment type="catalytic activity">
    <reaction evidence="1">
        <text>dimethylallyl diphosphate + 2 oxidized [2Fe-2S]-[ferredoxin] + H2O = (2E)-4-hydroxy-3-methylbut-2-enyl diphosphate + 2 reduced [2Fe-2S]-[ferredoxin] + 2 H(+)</text>
        <dbReference type="Rhea" id="RHEA:24825"/>
        <dbReference type="Rhea" id="RHEA-COMP:10000"/>
        <dbReference type="Rhea" id="RHEA-COMP:10001"/>
        <dbReference type="ChEBI" id="CHEBI:15377"/>
        <dbReference type="ChEBI" id="CHEBI:15378"/>
        <dbReference type="ChEBI" id="CHEBI:33737"/>
        <dbReference type="ChEBI" id="CHEBI:33738"/>
        <dbReference type="ChEBI" id="CHEBI:57623"/>
        <dbReference type="ChEBI" id="CHEBI:128753"/>
        <dbReference type="EC" id="1.17.7.4"/>
    </reaction>
</comment>
<comment type="cofactor">
    <cofactor evidence="1">
        <name>[4Fe-4S] cluster</name>
        <dbReference type="ChEBI" id="CHEBI:49883"/>
    </cofactor>
    <text evidence="1">Binds 1 [4Fe-4S] cluster per subunit.</text>
</comment>
<comment type="pathway">
    <text evidence="1">Isoprenoid biosynthesis; dimethylallyl diphosphate biosynthesis; dimethylallyl diphosphate from (2E)-4-hydroxy-3-methylbutenyl diphosphate: step 1/1.</text>
</comment>
<comment type="pathway">
    <text evidence="1">Isoprenoid biosynthesis; isopentenyl diphosphate biosynthesis via DXP pathway; isopentenyl diphosphate from 1-deoxy-D-xylulose 5-phosphate: step 6/6.</text>
</comment>
<comment type="similarity">
    <text evidence="1">Belongs to the IspH family.</text>
</comment>
<feature type="chain" id="PRO_1000021156" description="4-hydroxy-3-methylbut-2-enyl diphosphate reductase">
    <location>
        <begin position="1"/>
        <end position="401"/>
    </location>
</feature>
<feature type="active site" description="Proton donor" evidence="1">
    <location>
        <position position="187"/>
    </location>
</feature>
<feature type="binding site" evidence="1">
    <location>
        <position position="66"/>
    </location>
    <ligand>
        <name>[4Fe-4S] cluster</name>
        <dbReference type="ChEBI" id="CHEBI:49883"/>
    </ligand>
</feature>
<feature type="binding site" evidence="1">
    <location>
        <position position="96"/>
    </location>
    <ligand>
        <name>(2E)-4-hydroxy-3-methylbut-2-enyl diphosphate</name>
        <dbReference type="ChEBI" id="CHEBI:128753"/>
    </ligand>
</feature>
<feature type="binding site" evidence="1">
    <location>
        <position position="96"/>
    </location>
    <ligand>
        <name>dimethylallyl diphosphate</name>
        <dbReference type="ChEBI" id="CHEBI:57623"/>
    </ligand>
</feature>
<feature type="binding site" evidence="1">
    <location>
        <position position="96"/>
    </location>
    <ligand>
        <name>isopentenyl diphosphate</name>
        <dbReference type="ChEBI" id="CHEBI:128769"/>
    </ligand>
</feature>
<feature type="binding site" evidence="1">
    <location>
        <position position="157"/>
    </location>
    <ligand>
        <name>[4Fe-4S] cluster</name>
        <dbReference type="ChEBI" id="CHEBI:49883"/>
    </ligand>
</feature>
<feature type="binding site" evidence="1">
    <location>
        <position position="185"/>
    </location>
    <ligand>
        <name>(2E)-4-hydroxy-3-methylbut-2-enyl diphosphate</name>
        <dbReference type="ChEBI" id="CHEBI:128753"/>
    </ligand>
</feature>
<feature type="binding site" evidence="1">
    <location>
        <position position="185"/>
    </location>
    <ligand>
        <name>dimethylallyl diphosphate</name>
        <dbReference type="ChEBI" id="CHEBI:57623"/>
    </ligand>
</feature>
<feature type="binding site" evidence="1">
    <location>
        <position position="185"/>
    </location>
    <ligand>
        <name>isopentenyl diphosphate</name>
        <dbReference type="ChEBI" id="CHEBI:128769"/>
    </ligand>
</feature>
<feature type="binding site" evidence="1">
    <location>
        <position position="250"/>
    </location>
    <ligand>
        <name>(2E)-4-hydroxy-3-methylbut-2-enyl diphosphate</name>
        <dbReference type="ChEBI" id="CHEBI:128753"/>
    </ligand>
</feature>
<feature type="binding site" evidence="1">
    <location>
        <position position="288"/>
    </location>
    <ligand>
        <name>[4Fe-4S] cluster</name>
        <dbReference type="ChEBI" id="CHEBI:49883"/>
    </ligand>
</feature>
<feature type="binding site" evidence="1">
    <location>
        <position position="317"/>
    </location>
    <ligand>
        <name>(2E)-4-hydroxy-3-methylbut-2-enyl diphosphate</name>
        <dbReference type="ChEBI" id="CHEBI:128753"/>
    </ligand>
</feature>
<feature type="binding site" evidence="1">
    <location>
        <position position="317"/>
    </location>
    <ligand>
        <name>dimethylallyl diphosphate</name>
        <dbReference type="ChEBI" id="CHEBI:57623"/>
    </ligand>
</feature>
<feature type="binding site" evidence="1">
    <location>
        <position position="317"/>
    </location>
    <ligand>
        <name>isopentenyl diphosphate</name>
        <dbReference type="ChEBI" id="CHEBI:128769"/>
    </ligand>
</feature>
<feature type="binding site" evidence="1">
    <location>
        <position position="318"/>
    </location>
    <ligand>
        <name>(2E)-4-hydroxy-3-methylbut-2-enyl diphosphate</name>
        <dbReference type="ChEBI" id="CHEBI:128753"/>
    </ligand>
</feature>
<feature type="binding site" evidence="1">
    <location>
        <position position="318"/>
    </location>
    <ligand>
        <name>dimethylallyl diphosphate</name>
        <dbReference type="ChEBI" id="CHEBI:57623"/>
    </ligand>
</feature>
<feature type="binding site" evidence="1">
    <location>
        <position position="318"/>
    </location>
    <ligand>
        <name>isopentenyl diphosphate</name>
        <dbReference type="ChEBI" id="CHEBI:128769"/>
    </ligand>
</feature>
<feature type="binding site" evidence="1">
    <location>
        <position position="319"/>
    </location>
    <ligand>
        <name>(2E)-4-hydroxy-3-methylbut-2-enyl diphosphate</name>
        <dbReference type="ChEBI" id="CHEBI:128753"/>
    </ligand>
</feature>
<feature type="binding site" evidence="1">
    <location>
        <position position="319"/>
    </location>
    <ligand>
        <name>dimethylallyl diphosphate</name>
        <dbReference type="ChEBI" id="CHEBI:57623"/>
    </ligand>
</feature>
<feature type="binding site" evidence="1">
    <location>
        <position position="319"/>
    </location>
    <ligand>
        <name>isopentenyl diphosphate</name>
        <dbReference type="ChEBI" id="CHEBI:128769"/>
    </ligand>
</feature>
<feature type="binding site" evidence="1">
    <location>
        <position position="381"/>
    </location>
    <ligand>
        <name>(2E)-4-hydroxy-3-methylbut-2-enyl diphosphate</name>
        <dbReference type="ChEBI" id="CHEBI:128753"/>
    </ligand>
</feature>
<feature type="binding site" evidence="1">
    <location>
        <position position="381"/>
    </location>
    <ligand>
        <name>dimethylallyl diphosphate</name>
        <dbReference type="ChEBI" id="CHEBI:57623"/>
    </ligand>
</feature>
<feature type="binding site" evidence="1">
    <location>
        <position position="381"/>
    </location>
    <ligand>
        <name>isopentenyl diphosphate</name>
        <dbReference type="ChEBI" id="CHEBI:128769"/>
    </ligand>
</feature>
<reference key="1">
    <citation type="journal article" date="2007" name="PLoS Genet.">
        <title>Patterns and implications of gene gain and loss in the evolution of Prochlorococcus.</title>
        <authorList>
            <person name="Kettler G.C."/>
            <person name="Martiny A.C."/>
            <person name="Huang K."/>
            <person name="Zucker J."/>
            <person name="Coleman M.L."/>
            <person name="Rodrigue S."/>
            <person name="Chen F."/>
            <person name="Lapidus A."/>
            <person name="Ferriera S."/>
            <person name="Johnson J."/>
            <person name="Steglich C."/>
            <person name="Church G.M."/>
            <person name="Richardson P."/>
            <person name="Chisholm S.W."/>
        </authorList>
    </citation>
    <scope>NUCLEOTIDE SEQUENCE [LARGE SCALE GENOMIC DNA]</scope>
    <source>
        <strain>NATL2A</strain>
    </source>
</reference>
<evidence type="ECO:0000255" key="1">
    <source>
        <dbReference type="HAMAP-Rule" id="MF_00191"/>
    </source>
</evidence>
<keyword id="KW-0004">4Fe-4S</keyword>
<keyword id="KW-0408">Iron</keyword>
<keyword id="KW-0411">Iron-sulfur</keyword>
<keyword id="KW-0414">Isoprene biosynthesis</keyword>
<keyword id="KW-0479">Metal-binding</keyword>
<keyword id="KW-0560">Oxidoreductase</keyword>
<keyword id="KW-1185">Reference proteome</keyword>
<gene>
    <name evidence="1" type="primary">ispH</name>
    <name type="ordered locus">PMN2A_1630</name>
</gene>